<proteinExistence type="inferred from homology"/>
<keyword id="KW-1185">Reference proteome</keyword>
<keyword id="KW-1277">Toxin-antitoxin system</keyword>
<evidence type="ECO:0000305" key="1"/>
<dbReference type="EMBL" id="AE000782">
    <property type="protein sequence ID" value="AAB90154.1"/>
    <property type="molecule type" value="Genomic_DNA"/>
</dbReference>
<dbReference type="PIR" id="F69386">
    <property type="entry name" value="F69386"/>
</dbReference>
<dbReference type="RefSeq" id="WP_010878591.1">
    <property type="nucleotide sequence ID" value="NC_000917.1"/>
</dbReference>
<dbReference type="SMR" id="O29170"/>
<dbReference type="STRING" id="224325.AF_1095"/>
<dbReference type="PaxDb" id="224325-AF_1095"/>
<dbReference type="EnsemblBacteria" id="AAB90154">
    <property type="protein sequence ID" value="AAB90154"/>
    <property type="gene ID" value="AF_1095"/>
</dbReference>
<dbReference type="KEGG" id="afu:AF_1095"/>
<dbReference type="eggNOG" id="arCOG03880">
    <property type="taxonomic scope" value="Archaea"/>
</dbReference>
<dbReference type="HOGENOM" id="CLU_200885_3_1_2"/>
<dbReference type="OrthoDB" id="116241at2157"/>
<dbReference type="PhylomeDB" id="O29170"/>
<dbReference type="Proteomes" id="UP000002199">
    <property type="component" value="Chromosome"/>
</dbReference>
<dbReference type="Gene3D" id="4.10.1150.10">
    <property type="entry name" value="AF2212/PG0164-like"/>
    <property type="match status" value="1"/>
</dbReference>
<dbReference type="InterPro" id="IPR008203">
    <property type="entry name" value="AF2212-like"/>
</dbReference>
<dbReference type="InterPro" id="IPR024069">
    <property type="entry name" value="AF2212-like_dom_sf"/>
</dbReference>
<dbReference type="Pfam" id="PF01954">
    <property type="entry name" value="AF2212-like"/>
    <property type="match status" value="1"/>
</dbReference>
<dbReference type="SUPFAM" id="SSF141694">
    <property type="entry name" value="AF2212/PG0164-like"/>
    <property type="match status" value="1"/>
</dbReference>
<organism>
    <name type="scientific">Archaeoglobus fulgidus (strain ATCC 49558 / DSM 4304 / JCM 9628 / NBRC 100126 / VC-16)</name>
    <dbReference type="NCBI Taxonomy" id="224325"/>
    <lineage>
        <taxon>Archaea</taxon>
        <taxon>Methanobacteriati</taxon>
        <taxon>Methanobacteriota</taxon>
        <taxon>Archaeoglobi</taxon>
        <taxon>Archaeoglobales</taxon>
        <taxon>Archaeoglobaceae</taxon>
        <taxon>Archaeoglobus</taxon>
    </lineage>
</organism>
<reference key="1">
    <citation type="journal article" date="1997" name="Nature">
        <title>The complete genome sequence of the hyperthermophilic, sulphate-reducing archaeon Archaeoglobus fulgidus.</title>
        <authorList>
            <person name="Klenk H.-P."/>
            <person name="Clayton R.A."/>
            <person name="Tomb J.-F."/>
            <person name="White O."/>
            <person name="Nelson K.E."/>
            <person name="Ketchum K.A."/>
            <person name="Dodson R.J."/>
            <person name="Gwinn M.L."/>
            <person name="Hickey E.K."/>
            <person name="Peterson J.D."/>
            <person name="Richardson D.L."/>
            <person name="Kerlavage A.R."/>
            <person name="Graham D.E."/>
            <person name="Kyrpides N.C."/>
            <person name="Fleischmann R.D."/>
            <person name="Quackenbush J."/>
            <person name="Lee N.H."/>
            <person name="Sutton G.G."/>
            <person name="Gill S.R."/>
            <person name="Kirkness E.F."/>
            <person name="Dougherty B.A."/>
            <person name="McKenney K."/>
            <person name="Adams M.D."/>
            <person name="Loftus B.J."/>
            <person name="Peterson S.N."/>
            <person name="Reich C.I."/>
            <person name="McNeil L.K."/>
            <person name="Badger J.H."/>
            <person name="Glodek A."/>
            <person name="Zhou L."/>
            <person name="Overbeek R."/>
            <person name="Gocayne J.D."/>
            <person name="Weidman J.F."/>
            <person name="McDonald L.A."/>
            <person name="Utterback T.R."/>
            <person name="Cotton M.D."/>
            <person name="Spriggs T."/>
            <person name="Artiach P."/>
            <person name="Kaine B.P."/>
            <person name="Sykes S.M."/>
            <person name="Sadow P.W."/>
            <person name="D'Andrea K.P."/>
            <person name="Bowman C."/>
            <person name="Fujii C."/>
            <person name="Garland S.A."/>
            <person name="Mason T.M."/>
            <person name="Olsen G.J."/>
            <person name="Fraser C.M."/>
            <person name="Smith H.O."/>
            <person name="Woese C.R."/>
            <person name="Venter J.C."/>
        </authorList>
    </citation>
    <scope>NUCLEOTIDE SEQUENCE [LARGE SCALE GENOMIC DNA]</scope>
    <source>
        <strain>ATCC 49558 / DSM 4304 / JCM 9628 / NBRC 100126 / VC-16</strain>
    </source>
</reference>
<comment type="function">
    <text evidence="1">Possibly the antitoxin component of a type II toxin-antitoxin (TA) system.</text>
</comment>
<comment type="similarity">
    <text evidence="1">Belongs to the UPF0165 family.</text>
</comment>
<gene>
    <name type="ordered locus">AF_1095</name>
</gene>
<feature type="chain" id="PRO_0000156855" description="Putative antitoxin AF_1095">
    <location>
        <begin position="1"/>
        <end position="62"/>
    </location>
</feature>
<sequence>MPKIIEAIYENGVFKPLQKVDLKEGERIKLRIEEGILDVIKKYQGKFKLTEKDIEKFLEERR</sequence>
<protein>
    <recommendedName>
        <fullName>Putative antitoxin AF_1095</fullName>
    </recommendedName>
</protein>
<accession>O29170</accession>
<name>Y1095_ARCFU</name>